<protein>
    <recommendedName>
        <fullName evidence="1">N-acetylmuramic acid 6-phosphate etherase</fullName>
        <shortName evidence="1">MurNAc-6-P etherase</shortName>
        <ecNumber evidence="1">4.2.1.126</ecNumber>
    </recommendedName>
    <alternativeName>
        <fullName evidence="1">N-acetylmuramic acid 6-phosphate hydrolase</fullName>
    </alternativeName>
    <alternativeName>
        <fullName evidence="1">N-acetylmuramic acid 6-phosphate lyase</fullName>
    </alternativeName>
</protein>
<comment type="function">
    <text evidence="1">Specifically catalyzes the cleavage of the D-lactyl ether substituent of MurNAc 6-phosphate, producing GlcNAc 6-phosphate and D-lactate.</text>
</comment>
<comment type="catalytic activity">
    <reaction evidence="1">
        <text>N-acetyl-D-muramate 6-phosphate + H2O = N-acetyl-D-glucosamine 6-phosphate + (R)-lactate</text>
        <dbReference type="Rhea" id="RHEA:26410"/>
        <dbReference type="ChEBI" id="CHEBI:15377"/>
        <dbReference type="ChEBI" id="CHEBI:16004"/>
        <dbReference type="ChEBI" id="CHEBI:57513"/>
        <dbReference type="ChEBI" id="CHEBI:58722"/>
        <dbReference type="EC" id="4.2.1.126"/>
    </reaction>
</comment>
<comment type="pathway">
    <text evidence="1">Amino-sugar metabolism; N-acetylmuramate degradation.</text>
</comment>
<comment type="subunit">
    <text evidence="1">Homodimer.</text>
</comment>
<comment type="miscellaneous">
    <text evidence="1">A lyase-type mechanism (elimination/hydration) is suggested for the cleavage of the lactyl ether bond of MurNAc 6-phosphate, with the formation of an alpha,beta-unsaturated aldehyde intermediate with (E)-stereochemistry, followed by the syn addition of water to give product.</text>
</comment>
<comment type="similarity">
    <text evidence="1">Belongs to the GCKR-like family. MurNAc-6-P etherase subfamily.</text>
</comment>
<sequence>MMENSTTEARNEATMHLDEMTVEEALITMNKEDQQVPLAVRKAIPQLTKVIKKTIAQYKKGGRLIYIGAGTSGRLGVLDAAECVPTFNTDPHEIIGIIAGGQHAMTMAVEGAEDHKKLAEEDLKNIDLTSKDVVIGIAASGKTPYVIGGLTFANTIGATTVSISCNEHAVISEIAQYPVEVKVGPEVLTGSTRLKSGTAQKLILNMISTITMVGVGKVYDNLMIDVKATNQKLIDRSVRIIQEICAITYDEAMALYQVSEHDVKVATVMGMCGISKEEATRRLLNNGDIVKRAIRDRQP</sequence>
<name>MURQ_STAAC</name>
<dbReference type="EC" id="4.2.1.126" evidence="1"/>
<dbReference type="EMBL" id="CP000046">
    <property type="protein sequence ID" value="AAW37473.1"/>
    <property type="molecule type" value="Genomic_DNA"/>
</dbReference>
<dbReference type="SMR" id="Q5HJI1"/>
<dbReference type="KEGG" id="sac:SACOL0177"/>
<dbReference type="HOGENOM" id="CLU_049049_1_1_9"/>
<dbReference type="UniPathway" id="UPA00342"/>
<dbReference type="Proteomes" id="UP000000530">
    <property type="component" value="Chromosome"/>
</dbReference>
<dbReference type="GO" id="GO:0097367">
    <property type="term" value="F:carbohydrate derivative binding"/>
    <property type="evidence" value="ECO:0007669"/>
    <property type="project" value="InterPro"/>
</dbReference>
<dbReference type="GO" id="GO:0016835">
    <property type="term" value="F:carbon-oxygen lyase activity"/>
    <property type="evidence" value="ECO:0007669"/>
    <property type="project" value="UniProtKB-UniRule"/>
</dbReference>
<dbReference type="GO" id="GO:0016803">
    <property type="term" value="F:ether hydrolase activity"/>
    <property type="evidence" value="ECO:0007669"/>
    <property type="project" value="TreeGrafter"/>
</dbReference>
<dbReference type="GO" id="GO:0046348">
    <property type="term" value="P:amino sugar catabolic process"/>
    <property type="evidence" value="ECO:0007669"/>
    <property type="project" value="InterPro"/>
</dbReference>
<dbReference type="GO" id="GO:0097173">
    <property type="term" value="P:N-acetylmuramic acid catabolic process"/>
    <property type="evidence" value="ECO:0007669"/>
    <property type="project" value="UniProtKB-UniPathway"/>
</dbReference>
<dbReference type="GO" id="GO:0009254">
    <property type="term" value="P:peptidoglycan turnover"/>
    <property type="evidence" value="ECO:0007669"/>
    <property type="project" value="TreeGrafter"/>
</dbReference>
<dbReference type="CDD" id="cd05007">
    <property type="entry name" value="SIS_Etherase"/>
    <property type="match status" value="1"/>
</dbReference>
<dbReference type="FunFam" id="1.10.8.1080:FF:000001">
    <property type="entry name" value="N-acetylmuramic acid 6-phosphate etherase"/>
    <property type="match status" value="1"/>
</dbReference>
<dbReference type="FunFam" id="3.40.50.10490:FF:000014">
    <property type="entry name" value="N-acetylmuramic acid 6-phosphate etherase"/>
    <property type="match status" value="1"/>
</dbReference>
<dbReference type="Gene3D" id="1.10.8.1080">
    <property type="match status" value="1"/>
</dbReference>
<dbReference type="Gene3D" id="3.40.50.10490">
    <property type="entry name" value="Glucose-6-phosphate isomerase like protein, domain 1"/>
    <property type="match status" value="1"/>
</dbReference>
<dbReference type="HAMAP" id="MF_00068">
    <property type="entry name" value="MurQ"/>
    <property type="match status" value="1"/>
</dbReference>
<dbReference type="InterPro" id="IPR005488">
    <property type="entry name" value="Etherase_MurQ"/>
</dbReference>
<dbReference type="InterPro" id="IPR005486">
    <property type="entry name" value="Glucokinase_regulatory_CS"/>
</dbReference>
<dbReference type="InterPro" id="IPR040190">
    <property type="entry name" value="MURQ/GCKR"/>
</dbReference>
<dbReference type="InterPro" id="IPR000408">
    <property type="entry name" value="Reg_chr_condens"/>
</dbReference>
<dbReference type="InterPro" id="IPR001347">
    <property type="entry name" value="SIS_dom"/>
</dbReference>
<dbReference type="InterPro" id="IPR046348">
    <property type="entry name" value="SIS_dom_sf"/>
</dbReference>
<dbReference type="NCBIfam" id="TIGR00274">
    <property type="entry name" value="N-acetylmuramic acid 6-phosphate etherase"/>
    <property type="match status" value="1"/>
</dbReference>
<dbReference type="NCBIfam" id="NF003915">
    <property type="entry name" value="PRK05441.1"/>
    <property type="match status" value="1"/>
</dbReference>
<dbReference type="NCBIfam" id="NF009222">
    <property type="entry name" value="PRK12570.1"/>
    <property type="match status" value="1"/>
</dbReference>
<dbReference type="PANTHER" id="PTHR10088">
    <property type="entry name" value="GLUCOKINASE REGULATORY PROTEIN"/>
    <property type="match status" value="1"/>
</dbReference>
<dbReference type="PANTHER" id="PTHR10088:SF4">
    <property type="entry name" value="GLUCOKINASE REGULATORY PROTEIN"/>
    <property type="match status" value="1"/>
</dbReference>
<dbReference type="Pfam" id="PF22645">
    <property type="entry name" value="GKRP_SIS_N"/>
    <property type="match status" value="1"/>
</dbReference>
<dbReference type="SUPFAM" id="SSF53697">
    <property type="entry name" value="SIS domain"/>
    <property type="match status" value="1"/>
</dbReference>
<dbReference type="PROSITE" id="PS01272">
    <property type="entry name" value="GCKR"/>
    <property type="match status" value="1"/>
</dbReference>
<dbReference type="PROSITE" id="PS51464">
    <property type="entry name" value="SIS"/>
    <property type="match status" value="1"/>
</dbReference>
<gene>
    <name evidence="1" type="primary">murQ</name>
    <name type="ordered locus">SACOL0177</name>
</gene>
<keyword id="KW-0119">Carbohydrate metabolism</keyword>
<keyword id="KW-0456">Lyase</keyword>
<proteinExistence type="inferred from homology"/>
<organism>
    <name type="scientific">Staphylococcus aureus (strain COL)</name>
    <dbReference type="NCBI Taxonomy" id="93062"/>
    <lineage>
        <taxon>Bacteria</taxon>
        <taxon>Bacillati</taxon>
        <taxon>Bacillota</taxon>
        <taxon>Bacilli</taxon>
        <taxon>Bacillales</taxon>
        <taxon>Staphylococcaceae</taxon>
        <taxon>Staphylococcus</taxon>
    </lineage>
</organism>
<reference key="1">
    <citation type="journal article" date="2005" name="J. Bacteriol.">
        <title>Insights on evolution of virulence and resistance from the complete genome analysis of an early methicillin-resistant Staphylococcus aureus strain and a biofilm-producing methicillin-resistant Staphylococcus epidermidis strain.</title>
        <authorList>
            <person name="Gill S.R."/>
            <person name="Fouts D.E."/>
            <person name="Archer G.L."/>
            <person name="Mongodin E.F."/>
            <person name="DeBoy R.T."/>
            <person name="Ravel J."/>
            <person name="Paulsen I.T."/>
            <person name="Kolonay J.F."/>
            <person name="Brinkac L.M."/>
            <person name="Beanan M.J."/>
            <person name="Dodson R.J."/>
            <person name="Daugherty S.C."/>
            <person name="Madupu R."/>
            <person name="Angiuoli S.V."/>
            <person name="Durkin A.S."/>
            <person name="Haft D.H."/>
            <person name="Vamathevan J.J."/>
            <person name="Khouri H."/>
            <person name="Utterback T.R."/>
            <person name="Lee C."/>
            <person name="Dimitrov G."/>
            <person name="Jiang L."/>
            <person name="Qin H."/>
            <person name="Weidman J."/>
            <person name="Tran K."/>
            <person name="Kang K.H."/>
            <person name="Hance I.R."/>
            <person name="Nelson K.E."/>
            <person name="Fraser C.M."/>
        </authorList>
    </citation>
    <scope>NUCLEOTIDE SEQUENCE [LARGE SCALE GENOMIC DNA]</scope>
    <source>
        <strain>COL</strain>
    </source>
</reference>
<evidence type="ECO:0000255" key="1">
    <source>
        <dbReference type="HAMAP-Rule" id="MF_00068"/>
    </source>
</evidence>
<feature type="chain" id="PRO_0000249654" description="N-acetylmuramic acid 6-phosphate etherase">
    <location>
        <begin position="1"/>
        <end position="299"/>
    </location>
</feature>
<feature type="domain" description="SIS" evidence="1">
    <location>
        <begin position="54"/>
        <end position="217"/>
    </location>
</feature>
<feature type="active site" description="Proton donor" evidence="1">
    <location>
        <position position="82"/>
    </location>
</feature>
<feature type="active site" evidence="1">
    <location>
        <position position="113"/>
    </location>
</feature>
<accession>Q5HJI1</accession>